<feature type="signal peptide" evidence="3">
    <location>
        <begin position="1"/>
        <end position="34"/>
    </location>
</feature>
<feature type="chain" id="PRO_0000013576" description="Endoplasmic reticulum chaperone BiP">
    <location>
        <begin position="35"/>
        <end position="674"/>
    </location>
</feature>
<feature type="region of interest" description="Nucleotide-binding (NBD)" evidence="1">
    <location>
        <begin position="143"/>
        <end position="297"/>
    </location>
</feature>
<feature type="region of interest" description="Substrate-binding (SBD)" evidence="1">
    <location>
        <begin position="416"/>
        <end position="516"/>
    </location>
</feature>
<feature type="region of interest" description="Disordered" evidence="5">
    <location>
        <begin position="651"/>
        <end position="674"/>
    </location>
</feature>
<feature type="short sequence motif" description="Prevents secretion from ER" evidence="4">
    <location>
        <begin position="671"/>
        <end position="674"/>
    </location>
</feature>
<feature type="compositionally biased region" description="Acidic residues" evidence="5">
    <location>
        <begin position="657"/>
        <end position="674"/>
    </location>
</feature>
<feature type="binding site" evidence="1">
    <location>
        <begin position="55"/>
        <end position="58"/>
    </location>
    <ligand>
        <name>ATP</name>
        <dbReference type="ChEBI" id="CHEBI:30616"/>
    </ligand>
</feature>
<feature type="binding site" evidence="1">
    <location>
        <position position="114"/>
    </location>
    <ligand>
        <name>ATP</name>
        <dbReference type="ChEBI" id="CHEBI:30616"/>
    </ligand>
</feature>
<feature type="binding site" evidence="1">
    <location>
        <begin position="244"/>
        <end position="246"/>
    </location>
    <ligand>
        <name>ATP</name>
        <dbReference type="ChEBI" id="CHEBI:30616"/>
    </ligand>
</feature>
<feature type="binding site" evidence="1">
    <location>
        <begin position="310"/>
        <end position="317"/>
    </location>
    <ligand>
        <name>ATP</name>
        <dbReference type="ChEBI" id="CHEBI:30616"/>
    </ligand>
</feature>
<feature type="binding site" evidence="1">
    <location>
        <begin position="381"/>
        <end position="384"/>
    </location>
    <ligand>
        <name>ATP</name>
        <dbReference type="ChEBI" id="CHEBI:30616"/>
    </ligand>
</feature>
<organism>
    <name type="scientific">Eremothecium gossypii (strain ATCC 10895 / CBS 109.51 / FGSC 9923 / NRRL Y-1056)</name>
    <name type="common">Yeast</name>
    <name type="synonym">Ashbya gossypii</name>
    <dbReference type="NCBI Taxonomy" id="284811"/>
    <lineage>
        <taxon>Eukaryota</taxon>
        <taxon>Fungi</taxon>
        <taxon>Dikarya</taxon>
        <taxon>Ascomycota</taxon>
        <taxon>Saccharomycotina</taxon>
        <taxon>Saccharomycetes</taxon>
        <taxon>Saccharomycetales</taxon>
        <taxon>Saccharomycetaceae</taxon>
        <taxon>Eremothecium</taxon>
    </lineage>
</organism>
<protein>
    <recommendedName>
        <fullName evidence="6">Endoplasmic reticulum chaperone BiP</fullName>
        <ecNumber evidence="1">3.6.4.10</ecNumber>
    </recommendedName>
    <alternativeName>
        <fullName evidence="6">Immunoglobulin heavy chain-binding protein homolog</fullName>
        <shortName evidence="6">BiP</shortName>
    </alternativeName>
</protein>
<keyword id="KW-0067">ATP-binding</keyword>
<keyword id="KW-0143">Chaperone</keyword>
<keyword id="KW-0256">Endoplasmic reticulum</keyword>
<keyword id="KW-0378">Hydrolase</keyword>
<keyword id="KW-0547">Nucleotide-binding</keyword>
<keyword id="KW-1185">Reference proteome</keyword>
<keyword id="KW-0732">Signal</keyword>
<keyword id="KW-0346">Stress response</keyword>
<comment type="function">
    <text evidence="2">Probably plays a role in facilitating the assembly of multimeric protein complexes inside the ER. Is required for secretory polypeptide translocation. May physically associate with SEC63 protein in the endoplasmic reticulum and this interaction may be regulated by ATP hydrolysis.</text>
</comment>
<comment type="catalytic activity">
    <reaction evidence="1">
        <text>ATP + H2O = ADP + phosphate + H(+)</text>
        <dbReference type="Rhea" id="RHEA:13065"/>
        <dbReference type="ChEBI" id="CHEBI:15377"/>
        <dbReference type="ChEBI" id="CHEBI:15378"/>
        <dbReference type="ChEBI" id="CHEBI:30616"/>
        <dbReference type="ChEBI" id="CHEBI:43474"/>
        <dbReference type="ChEBI" id="CHEBI:456216"/>
        <dbReference type="EC" id="3.6.4.10"/>
    </reaction>
</comment>
<comment type="activity regulation">
    <text evidence="1">The chaperone activity is regulated by ATP-induced allosteric coupling of the nucleotide-binding (NBD) and substrate-binding (SBD) domains. In the ADP-bound and nucleotide-free (apo) states, the two domains have little interaction. In contrast, in the ATP-bound state the two domains are tightly coupled, which results in drastically accelerated kinetics in both binding and release of polypeptide substrates. J domain-containing co-chaperones stimulate the ATPase activity and are required for efficient substrate recognition.</text>
</comment>
<comment type="subcellular location">
    <subcellularLocation>
        <location evidence="2 4">Endoplasmic reticulum lumen</location>
    </subcellularLocation>
</comment>
<comment type="similarity">
    <text evidence="6">Belongs to the heat shock protein 70 family.</text>
</comment>
<gene>
    <name type="primary">KAR2</name>
    <name type="ordered locus">ACR038W</name>
</gene>
<proteinExistence type="inferred from homology"/>
<evidence type="ECO:0000250" key="1">
    <source>
        <dbReference type="UniProtKB" id="P11021"/>
    </source>
</evidence>
<evidence type="ECO:0000250" key="2">
    <source>
        <dbReference type="UniProtKB" id="P16474"/>
    </source>
</evidence>
<evidence type="ECO:0000255" key="3"/>
<evidence type="ECO:0000255" key="4">
    <source>
        <dbReference type="PROSITE-ProRule" id="PRU10138"/>
    </source>
</evidence>
<evidence type="ECO:0000256" key="5">
    <source>
        <dbReference type="SAM" id="MobiDB-lite"/>
    </source>
</evidence>
<evidence type="ECO:0000305" key="6"/>
<sequence>MAFGKVSNWAVPLTALMYAMALVCLPMFAGGSRGLVYAADTDAENYGTVIGIDLGTTYSCVALMRNGKTEILANEQGNRITPSYVAFTDDERLIGDAAKNQVANNPKNTIFDIKRLIGLKYNDKTVQREIKHLPFEVVDKNGMPAVAVTVKGERKLFTPEEISGMVLGKMKQIAEEYLGKKVTHAVVTVPAYFNDAQRQATKDAGAIAGLNILRIVNEPTAAAIAYGLDKTEDEHRIVVYDLGGGTFDVSLLSIENGVFEVQATAGDTHLGGEDFDYKLVRHFLKVFKKKHGVDVSSNAKAMAKLKREAEKAKRALSSQMSTRVEIDSFVDGIDFSETLTRAKFEEMNLDLFKRTLKPVEKVLQDAGLKKEDIDDIVLVGGSTRIPKVQELLENFFNKKASKGINPDEAVAYGAAVQAGVLSGEEGVEDIVLLDVNPLTLGIEVTGGIMTPLIKRNTPIPTKKSQIFSTAVDNQKTVMIQVYEGERAMAKDNNHLGKFELSGIPPAPRGIPQIEVTFALDANGILKVSATDKGTGKSESVTITNEKGRLSKDDIERMVAEAENYQKEDEEIRAKVEARHKLENYAHSLKNQVNGDLGDKLEEDDKETLLEAANDVLEWLEDNSDSATKEEFNEKFESLSQTAYPITSKLYGAGASDATDDEDDESDDYFDHDEL</sequence>
<name>BIP_EREGS</name>
<dbReference type="EC" id="3.6.4.10" evidence="1"/>
<dbReference type="EMBL" id="AE016816">
    <property type="protein sequence ID" value="AAS51265.1"/>
    <property type="molecule type" value="Genomic_DNA"/>
</dbReference>
<dbReference type="RefSeq" id="NP_983441.1">
    <property type="nucleotide sequence ID" value="NM_208794.1"/>
</dbReference>
<dbReference type="SMR" id="Q75C78"/>
<dbReference type="FunCoup" id="Q75C78">
    <property type="interactions" value="1449"/>
</dbReference>
<dbReference type="STRING" id="284811.Q75C78"/>
<dbReference type="EnsemblFungi" id="AAS51265">
    <property type="protein sequence ID" value="AAS51265"/>
    <property type="gene ID" value="AGOS_ACR038W"/>
</dbReference>
<dbReference type="GeneID" id="4619566"/>
<dbReference type="KEGG" id="ago:AGOS_ACR038W"/>
<dbReference type="eggNOG" id="KOG0100">
    <property type="taxonomic scope" value="Eukaryota"/>
</dbReference>
<dbReference type="HOGENOM" id="CLU_005965_7_0_1"/>
<dbReference type="InParanoid" id="Q75C78"/>
<dbReference type="OMA" id="VQRDIKH"/>
<dbReference type="OrthoDB" id="2401965at2759"/>
<dbReference type="Proteomes" id="UP000000591">
    <property type="component" value="Chromosome III"/>
</dbReference>
<dbReference type="GO" id="GO:0099021">
    <property type="term" value="C:cortical endoplasmic reticulum lumen"/>
    <property type="evidence" value="ECO:0007669"/>
    <property type="project" value="EnsemblFungi"/>
</dbReference>
<dbReference type="GO" id="GO:0005737">
    <property type="term" value="C:cytoplasm"/>
    <property type="evidence" value="ECO:0000318"/>
    <property type="project" value="GO_Central"/>
</dbReference>
<dbReference type="GO" id="GO:0034663">
    <property type="term" value="C:endoplasmic reticulum chaperone complex"/>
    <property type="evidence" value="ECO:0000318"/>
    <property type="project" value="GO_Central"/>
</dbReference>
<dbReference type="GO" id="GO:0005788">
    <property type="term" value="C:endoplasmic reticulum lumen"/>
    <property type="evidence" value="ECO:0000318"/>
    <property type="project" value="GO_Central"/>
</dbReference>
<dbReference type="GO" id="GO:0034099">
    <property type="term" value="C:luminal surveillance complex"/>
    <property type="evidence" value="ECO:0007669"/>
    <property type="project" value="EnsemblFungi"/>
</dbReference>
<dbReference type="GO" id="GO:0016020">
    <property type="term" value="C:membrane"/>
    <property type="evidence" value="ECO:0000318"/>
    <property type="project" value="GO_Central"/>
</dbReference>
<dbReference type="GO" id="GO:0031965">
    <property type="term" value="C:nuclear membrane"/>
    <property type="evidence" value="ECO:0007669"/>
    <property type="project" value="EnsemblFungi"/>
</dbReference>
<dbReference type="GO" id="GO:0005634">
    <property type="term" value="C:nucleus"/>
    <property type="evidence" value="ECO:0000318"/>
    <property type="project" value="GO_Central"/>
</dbReference>
<dbReference type="GO" id="GO:0099020">
    <property type="term" value="C:perinuclear endoplasmic reticulum lumen"/>
    <property type="evidence" value="ECO:0007669"/>
    <property type="project" value="EnsemblFungi"/>
</dbReference>
<dbReference type="GO" id="GO:0005524">
    <property type="term" value="F:ATP binding"/>
    <property type="evidence" value="ECO:0007669"/>
    <property type="project" value="UniProtKB-KW"/>
</dbReference>
<dbReference type="GO" id="GO:0016887">
    <property type="term" value="F:ATP hydrolysis activity"/>
    <property type="evidence" value="ECO:0000318"/>
    <property type="project" value="GO_Central"/>
</dbReference>
<dbReference type="GO" id="GO:0140662">
    <property type="term" value="F:ATP-dependent protein folding chaperone"/>
    <property type="evidence" value="ECO:0007669"/>
    <property type="project" value="InterPro"/>
</dbReference>
<dbReference type="GO" id="GO:0031072">
    <property type="term" value="F:heat shock protein binding"/>
    <property type="evidence" value="ECO:0000318"/>
    <property type="project" value="GO_Central"/>
</dbReference>
<dbReference type="GO" id="GO:0044183">
    <property type="term" value="F:protein folding chaperone"/>
    <property type="evidence" value="ECO:0000318"/>
    <property type="project" value="GO_Central"/>
</dbReference>
<dbReference type="GO" id="GO:0015450">
    <property type="term" value="F:protein-transporting ATPase activity"/>
    <property type="evidence" value="ECO:0007669"/>
    <property type="project" value="EnsemblFungi"/>
</dbReference>
<dbReference type="GO" id="GO:0051082">
    <property type="term" value="F:unfolded protein binding"/>
    <property type="evidence" value="ECO:0007669"/>
    <property type="project" value="EnsemblFungi"/>
</dbReference>
<dbReference type="GO" id="GO:0051085">
    <property type="term" value="P:chaperone cofactor-dependent protein refolding"/>
    <property type="evidence" value="ECO:0000318"/>
    <property type="project" value="GO_Central"/>
</dbReference>
<dbReference type="GO" id="GO:0030968">
    <property type="term" value="P:endoplasmic reticulum unfolded protein response"/>
    <property type="evidence" value="ECO:0000318"/>
    <property type="project" value="GO_Central"/>
</dbReference>
<dbReference type="GO" id="GO:0036503">
    <property type="term" value="P:ERAD pathway"/>
    <property type="evidence" value="ECO:0000318"/>
    <property type="project" value="GO_Central"/>
</dbReference>
<dbReference type="GO" id="GO:0070880">
    <property type="term" value="P:fungal-type cell wall beta-glucan biosynthetic process"/>
    <property type="evidence" value="ECO:0007669"/>
    <property type="project" value="EnsemblFungi"/>
</dbReference>
<dbReference type="GO" id="GO:0036498">
    <property type="term" value="P:IRE1-mediated unfolded protein response"/>
    <property type="evidence" value="ECO:0007669"/>
    <property type="project" value="EnsemblFungi"/>
</dbReference>
<dbReference type="GO" id="GO:0000742">
    <property type="term" value="P:karyogamy involved in conjugation with cellular fusion"/>
    <property type="evidence" value="ECO:0007669"/>
    <property type="project" value="EnsemblFungi"/>
</dbReference>
<dbReference type="GO" id="GO:0031204">
    <property type="term" value="P:post-translational protein targeting to membrane, translocation"/>
    <property type="evidence" value="ECO:0007669"/>
    <property type="project" value="EnsemblFungi"/>
</dbReference>
<dbReference type="GO" id="GO:0042026">
    <property type="term" value="P:protein refolding"/>
    <property type="evidence" value="ECO:0000318"/>
    <property type="project" value="GO_Central"/>
</dbReference>
<dbReference type="GO" id="GO:0006616">
    <property type="term" value="P:SRP-dependent cotranslational protein targeting to membrane, translocation"/>
    <property type="evidence" value="ECO:0007669"/>
    <property type="project" value="EnsemblFungi"/>
</dbReference>
<dbReference type="CDD" id="cd10241">
    <property type="entry name" value="ASKHA_NBD_HSP70_BiP"/>
    <property type="match status" value="1"/>
</dbReference>
<dbReference type="FunFam" id="1.20.1270.10:FF:000009">
    <property type="entry name" value="DnaK-type molecular chaperone BiP"/>
    <property type="match status" value="1"/>
</dbReference>
<dbReference type="FunFam" id="2.60.34.10:FF:000002">
    <property type="entry name" value="Heat shock 70 kDa"/>
    <property type="match status" value="1"/>
</dbReference>
<dbReference type="FunFam" id="3.90.640.10:FF:000002">
    <property type="entry name" value="Heat shock 70 kDa"/>
    <property type="match status" value="1"/>
</dbReference>
<dbReference type="FunFam" id="3.30.30.30:FF:000002">
    <property type="entry name" value="Heat shock 70 kDa protein 4"/>
    <property type="match status" value="1"/>
</dbReference>
<dbReference type="FunFam" id="3.30.420.40:FF:000026">
    <property type="entry name" value="Heat shock protein 70"/>
    <property type="match status" value="1"/>
</dbReference>
<dbReference type="Gene3D" id="1.20.1270.10">
    <property type="match status" value="1"/>
</dbReference>
<dbReference type="Gene3D" id="3.30.30.30">
    <property type="match status" value="1"/>
</dbReference>
<dbReference type="Gene3D" id="3.30.420.40">
    <property type="match status" value="2"/>
</dbReference>
<dbReference type="Gene3D" id="3.90.640.10">
    <property type="entry name" value="Actin, Chain A, domain 4"/>
    <property type="match status" value="1"/>
</dbReference>
<dbReference type="Gene3D" id="2.60.34.10">
    <property type="entry name" value="Substrate Binding Domain Of DNAk, Chain A, domain 1"/>
    <property type="match status" value="1"/>
</dbReference>
<dbReference type="InterPro" id="IPR043129">
    <property type="entry name" value="ATPase_NBD"/>
</dbReference>
<dbReference type="InterPro" id="IPR042050">
    <property type="entry name" value="BIP_NBD"/>
</dbReference>
<dbReference type="InterPro" id="IPR018181">
    <property type="entry name" value="Heat_shock_70_CS"/>
</dbReference>
<dbReference type="InterPro" id="IPR029048">
    <property type="entry name" value="HSP70_C_sf"/>
</dbReference>
<dbReference type="InterPro" id="IPR029047">
    <property type="entry name" value="HSP70_peptide-bd_sf"/>
</dbReference>
<dbReference type="InterPro" id="IPR013126">
    <property type="entry name" value="Hsp_70_fam"/>
</dbReference>
<dbReference type="NCBIfam" id="NF001413">
    <property type="entry name" value="PRK00290.1"/>
    <property type="match status" value="1"/>
</dbReference>
<dbReference type="PANTHER" id="PTHR19375">
    <property type="entry name" value="HEAT SHOCK PROTEIN 70KDA"/>
    <property type="match status" value="1"/>
</dbReference>
<dbReference type="Pfam" id="PF00012">
    <property type="entry name" value="HSP70"/>
    <property type="match status" value="1"/>
</dbReference>
<dbReference type="PRINTS" id="PR00301">
    <property type="entry name" value="HEATSHOCK70"/>
</dbReference>
<dbReference type="SUPFAM" id="SSF53067">
    <property type="entry name" value="Actin-like ATPase domain"/>
    <property type="match status" value="2"/>
</dbReference>
<dbReference type="SUPFAM" id="SSF100934">
    <property type="entry name" value="Heat shock protein 70kD (HSP70), C-terminal subdomain"/>
    <property type="match status" value="1"/>
</dbReference>
<dbReference type="SUPFAM" id="SSF100920">
    <property type="entry name" value="Heat shock protein 70kD (HSP70), peptide-binding domain"/>
    <property type="match status" value="1"/>
</dbReference>
<dbReference type="PROSITE" id="PS00014">
    <property type="entry name" value="ER_TARGET"/>
    <property type="match status" value="1"/>
</dbReference>
<dbReference type="PROSITE" id="PS00297">
    <property type="entry name" value="HSP70_1"/>
    <property type="match status" value="1"/>
</dbReference>
<dbReference type="PROSITE" id="PS00329">
    <property type="entry name" value="HSP70_2"/>
    <property type="match status" value="1"/>
</dbReference>
<dbReference type="PROSITE" id="PS01036">
    <property type="entry name" value="HSP70_3"/>
    <property type="match status" value="1"/>
</dbReference>
<reference key="1">
    <citation type="journal article" date="2004" name="Science">
        <title>The Ashbya gossypii genome as a tool for mapping the ancient Saccharomyces cerevisiae genome.</title>
        <authorList>
            <person name="Dietrich F.S."/>
            <person name="Voegeli S."/>
            <person name="Brachat S."/>
            <person name="Lerch A."/>
            <person name="Gates K."/>
            <person name="Steiner S."/>
            <person name="Mohr C."/>
            <person name="Poehlmann R."/>
            <person name="Luedi P."/>
            <person name="Choi S."/>
            <person name="Wing R.A."/>
            <person name="Flavier A."/>
            <person name="Gaffney T.D."/>
            <person name="Philippsen P."/>
        </authorList>
    </citation>
    <scope>NUCLEOTIDE SEQUENCE [LARGE SCALE GENOMIC DNA]</scope>
    <source>
        <strain>ATCC 10895 / CBS 109.51 / FGSC 9923 / NRRL Y-1056</strain>
    </source>
</reference>
<reference key="2">
    <citation type="journal article" date="2013" name="G3 (Bethesda)">
        <title>Genomes of Ashbya fungi isolated from insects reveal four mating-type loci, numerous translocations, lack of transposons, and distinct gene duplications.</title>
        <authorList>
            <person name="Dietrich F.S."/>
            <person name="Voegeli S."/>
            <person name="Kuo S."/>
            <person name="Philippsen P."/>
        </authorList>
    </citation>
    <scope>GENOME REANNOTATION</scope>
    <source>
        <strain>ATCC 10895 / CBS 109.51 / FGSC 9923 / NRRL Y-1056</strain>
    </source>
</reference>
<accession>Q75C78</accession>